<gene>
    <name type="primary">sec61g</name>
    <name type="ORF">DDB_G0287777</name>
</gene>
<dbReference type="EMBL" id="AAFI02000104">
    <property type="protein sequence ID" value="EAL63535.1"/>
    <property type="molecule type" value="Genomic_DNA"/>
</dbReference>
<dbReference type="RefSeq" id="XP_637046.1">
    <property type="nucleotide sequence ID" value="XM_631954.1"/>
</dbReference>
<dbReference type="SMR" id="Q54JV6"/>
<dbReference type="FunCoup" id="Q54JV6">
    <property type="interactions" value="456"/>
</dbReference>
<dbReference type="STRING" id="44689.Q54JV6"/>
<dbReference type="PaxDb" id="44689-DDB0235195"/>
<dbReference type="EnsemblProtists" id="EAL63535">
    <property type="protein sequence ID" value="EAL63535"/>
    <property type="gene ID" value="DDB_G0287777"/>
</dbReference>
<dbReference type="GeneID" id="8626300"/>
<dbReference type="KEGG" id="ddi:DDB_G0287777"/>
<dbReference type="dictyBase" id="DDB_G0287777">
    <property type="gene designation" value="sec61g"/>
</dbReference>
<dbReference type="VEuPathDB" id="AmoebaDB:DDB_G0287777"/>
<dbReference type="eggNOG" id="KOG3498">
    <property type="taxonomic scope" value="Eukaryota"/>
</dbReference>
<dbReference type="HOGENOM" id="CLU_167752_2_0_1"/>
<dbReference type="InParanoid" id="Q54JV6"/>
<dbReference type="OMA" id="KPDQKEY"/>
<dbReference type="PhylomeDB" id="Q54JV6"/>
<dbReference type="Reactome" id="R-DDI-9609523">
    <property type="pathway name" value="Insertion of tail-anchored proteins into the endoplasmic reticulum membrane"/>
</dbReference>
<dbReference type="PRO" id="PR:Q54JV6"/>
<dbReference type="Proteomes" id="UP000002195">
    <property type="component" value="Chromosome 5"/>
</dbReference>
<dbReference type="GO" id="GO:0071261">
    <property type="term" value="C:Ssh1 translocon complex"/>
    <property type="evidence" value="ECO:0000318"/>
    <property type="project" value="GO_Central"/>
</dbReference>
<dbReference type="GO" id="GO:0008320">
    <property type="term" value="F:protein transmembrane transporter activity"/>
    <property type="evidence" value="ECO:0000318"/>
    <property type="project" value="GO_Central"/>
</dbReference>
<dbReference type="GO" id="GO:0031204">
    <property type="term" value="P:post-translational protein targeting to membrane, translocation"/>
    <property type="evidence" value="ECO:0000318"/>
    <property type="project" value="GO_Central"/>
</dbReference>
<dbReference type="FunFam" id="1.20.5.820:FF:000001">
    <property type="entry name" value="Transport protein Sec61 subunit gamma"/>
    <property type="match status" value="1"/>
</dbReference>
<dbReference type="Gene3D" id="1.20.5.820">
    <property type="entry name" value="Preprotein translocase SecE subunit"/>
    <property type="match status" value="1"/>
</dbReference>
<dbReference type="HAMAP" id="MF_00422">
    <property type="entry name" value="SecE"/>
    <property type="match status" value="1"/>
</dbReference>
<dbReference type="InterPro" id="IPR023391">
    <property type="entry name" value="Prot_translocase_SecE_dom_sf"/>
</dbReference>
<dbReference type="InterPro" id="IPR008158">
    <property type="entry name" value="Translocase_Sec61-g"/>
</dbReference>
<dbReference type="InterPro" id="IPR001901">
    <property type="entry name" value="Translocase_SecE/Sec61-g"/>
</dbReference>
<dbReference type="NCBIfam" id="TIGR00327">
    <property type="entry name" value="secE_euk_arch"/>
    <property type="match status" value="1"/>
</dbReference>
<dbReference type="PANTHER" id="PTHR12309">
    <property type="entry name" value="SEC61 GAMMA SUBUNIT"/>
    <property type="match status" value="1"/>
</dbReference>
<dbReference type="Pfam" id="PF00584">
    <property type="entry name" value="SecE"/>
    <property type="match status" value="1"/>
</dbReference>
<dbReference type="SUPFAM" id="SSF103456">
    <property type="entry name" value="Preprotein translocase SecE subunit"/>
    <property type="match status" value="1"/>
</dbReference>
<dbReference type="PROSITE" id="PS01067">
    <property type="entry name" value="SECE_SEC61G"/>
    <property type="match status" value="1"/>
</dbReference>
<protein>
    <recommendedName>
        <fullName>Protein transport protein Sec61 subunit gamma</fullName>
    </recommendedName>
</protein>
<sequence length="69" mass="7621">MDILEETAAPLKDFAKNSIRLFKKCTKPDAQEFQKIALATLIGFAIMGFIGFFVKLIHIPINNILVGGV</sequence>
<name>SC61G_DICDI</name>
<reference key="1">
    <citation type="journal article" date="2005" name="Nature">
        <title>The genome of the social amoeba Dictyostelium discoideum.</title>
        <authorList>
            <person name="Eichinger L."/>
            <person name="Pachebat J.A."/>
            <person name="Gloeckner G."/>
            <person name="Rajandream M.A."/>
            <person name="Sucgang R."/>
            <person name="Berriman M."/>
            <person name="Song J."/>
            <person name="Olsen R."/>
            <person name="Szafranski K."/>
            <person name="Xu Q."/>
            <person name="Tunggal B."/>
            <person name="Kummerfeld S."/>
            <person name="Madera M."/>
            <person name="Konfortov B.A."/>
            <person name="Rivero F."/>
            <person name="Bankier A.T."/>
            <person name="Lehmann R."/>
            <person name="Hamlin N."/>
            <person name="Davies R."/>
            <person name="Gaudet P."/>
            <person name="Fey P."/>
            <person name="Pilcher K."/>
            <person name="Chen G."/>
            <person name="Saunders D."/>
            <person name="Sodergren E.J."/>
            <person name="Davis P."/>
            <person name="Kerhornou A."/>
            <person name="Nie X."/>
            <person name="Hall N."/>
            <person name="Anjard C."/>
            <person name="Hemphill L."/>
            <person name="Bason N."/>
            <person name="Farbrother P."/>
            <person name="Desany B."/>
            <person name="Just E."/>
            <person name="Morio T."/>
            <person name="Rost R."/>
            <person name="Churcher C.M."/>
            <person name="Cooper J."/>
            <person name="Haydock S."/>
            <person name="van Driessche N."/>
            <person name="Cronin A."/>
            <person name="Goodhead I."/>
            <person name="Muzny D.M."/>
            <person name="Mourier T."/>
            <person name="Pain A."/>
            <person name="Lu M."/>
            <person name="Harper D."/>
            <person name="Lindsay R."/>
            <person name="Hauser H."/>
            <person name="James K.D."/>
            <person name="Quiles M."/>
            <person name="Madan Babu M."/>
            <person name="Saito T."/>
            <person name="Buchrieser C."/>
            <person name="Wardroper A."/>
            <person name="Felder M."/>
            <person name="Thangavelu M."/>
            <person name="Johnson D."/>
            <person name="Knights A."/>
            <person name="Loulseged H."/>
            <person name="Mungall K.L."/>
            <person name="Oliver K."/>
            <person name="Price C."/>
            <person name="Quail M.A."/>
            <person name="Urushihara H."/>
            <person name="Hernandez J."/>
            <person name="Rabbinowitsch E."/>
            <person name="Steffen D."/>
            <person name="Sanders M."/>
            <person name="Ma J."/>
            <person name="Kohara Y."/>
            <person name="Sharp S."/>
            <person name="Simmonds M.N."/>
            <person name="Spiegler S."/>
            <person name="Tivey A."/>
            <person name="Sugano S."/>
            <person name="White B."/>
            <person name="Walker D."/>
            <person name="Woodward J.R."/>
            <person name="Winckler T."/>
            <person name="Tanaka Y."/>
            <person name="Shaulsky G."/>
            <person name="Schleicher M."/>
            <person name="Weinstock G.M."/>
            <person name="Rosenthal A."/>
            <person name="Cox E.C."/>
            <person name="Chisholm R.L."/>
            <person name="Gibbs R.A."/>
            <person name="Loomis W.F."/>
            <person name="Platzer M."/>
            <person name="Kay R.R."/>
            <person name="Williams J.G."/>
            <person name="Dear P.H."/>
            <person name="Noegel A.A."/>
            <person name="Barrell B.G."/>
            <person name="Kuspa A."/>
        </authorList>
    </citation>
    <scope>NUCLEOTIDE SEQUENCE [LARGE SCALE GENOMIC DNA]</scope>
    <source>
        <strain>AX4</strain>
    </source>
</reference>
<evidence type="ECO:0000250" key="1"/>
<evidence type="ECO:0000255" key="2"/>
<evidence type="ECO:0000305" key="3"/>
<feature type="chain" id="PRO_0000328021" description="Protein transport protein Sec61 subunit gamma">
    <location>
        <begin position="1"/>
        <end position="69"/>
    </location>
</feature>
<feature type="topological domain" description="Cytoplasmic" evidence="2">
    <location>
        <begin position="1"/>
        <end position="40"/>
    </location>
</feature>
<feature type="transmembrane region" description="Helical" evidence="2">
    <location>
        <begin position="41"/>
        <end position="61"/>
    </location>
</feature>
<feature type="topological domain" description="Extracellular" evidence="2">
    <location>
        <begin position="62"/>
        <end position="69"/>
    </location>
</feature>
<proteinExistence type="inferred from homology"/>
<organism>
    <name type="scientific">Dictyostelium discoideum</name>
    <name type="common">Social amoeba</name>
    <dbReference type="NCBI Taxonomy" id="44689"/>
    <lineage>
        <taxon>Eukaryota</taxon>
        <taxon>Amoebozoa</taxon>
        <taxon>Evosea</taxon>
        <taxon>Eumycetozoa</taxon>
        <taxon>Dictyostelia</taxon>
        <taxon>Dictyosteliales</taxon>
        <taxon>Dictyosteliaceae</taxon>
        <taxon>Dictyostelium</taxon>
    </lineage>
</organism>
<accession>Q54JV6</accession>
<comment type="function">
    <text evidence="1">Necessary for protein translocation in the endoplasmic reticulum.</text>
</comment>
<comment type="subunit">
    <text evidence="1">Heterotrimeric complex composed of SEC61-alpha, SEC61-beta and SEC61-gamma.</text>
</comment>
<comment type="subcellular location">
    <subcellularLocation>
        <location evidence="3">Endoplasmic reticulum membrane</location>
        <topology evidence="3">Single-pass membrane protein</topology>
    </subcellularLocation>
</comment>
<comment type="similarity">
    <text evidence="3">Belongs to the SecE/SEC61-gamma family.</text>
</comment>
<keyword id="KW-0256">Endoplasmic reticulum</keyword>
<keyword id="KW-0472">Membrane</keyword>
<keyword id="KW-0653">Protein transport</keyword>
<keyword id="KW-1185">Reference proteome</keyword>
<keyword id="KW-0811">Translocation</keyword>
<keyword id="KW-0812">Transmembrane</keyword>
<keyword id="KW-1133">Transmembrane helix</keyword>
<keyword id="KW-0813">Transport</keyword>